<feature type="chain" id="PRO_0000095443" description="Tyrosine recombinase XerD-like">
    <location>
        <begin position="1"/>
        <end position="248"/>
    </location>
</feature>
<feature type="domain" description="Core-binding (CB)" evidence="3">
    <location>
        <begin position="1"/>
        <end position="72"/>
    </location>
</feature>
<feature type="domain" description="Tyr recombinase" evidence="2">
    <location>
        <begin position="85"/>
        <end position="248"/>
    </location>
</feature>
<feature type="active site" evidence="2">
    <location>
        <position position="149"/>
    </location>
</feature>
<feature type="active site" evidence="2">
    <location>
        <position position="213"/>
    </location>
</feature>
<feature type="active site" description="O-(3'-phospho-DNA)-tyrosine intermediate" evidence="2">
    <location>
        <position position="245"/>
    </location>
</feature>
<dbReference type="EMBL" id="AE014074">
    <property type="protein sequence ID" value="AAM78873.1"/>
    <property type="molecule type" value="Genomic_DNA"/>
</dbReference>
<dbReference type="SMR" id="P0DH46"/>
<dbReference type="KEGG" id="spg:SpyM3_0266"/>
<dbReference type="HOGENOM" id="CLU_1128554_0_0_9"/>
<dbReference type="Proteomes" id="UP000000564">
    <property type="component" value="Chromosome"/>
</dbReference>
<dbReference type="GO" id="GO:0005737">
    <property type="term" value="C:cytoplasm"/>
    <property type="evidence" value="ECO:0007669"/>
    <property type="project" value="UniProtKB-SubCell"/>
</dbReference>
<dbReference type="GO" id="GO:0003677">
    <property type="term" value="F:DNA binding"/>
    <property type="evidence" value="ECO:0007669"/>
    <property type="project" value="UniProtKB-KW"/>
</dbReference>
<dbReference type="GO" id="GO:0009037">
    <property type="term" value="F:tyrosine-based site-specific recombinase activity"/>
    <property type="evidence" value="ECO:0007669"/>
    <property type="project" value="UniProtKB-UniRule"/>
</dbReference>
<dbReference type="GO" id="GO:0006313">
    <property type="term" value="P:DNA transposition"/>
    <property type="evidence" value="ECO:0007669"/>
    <property type="project" value="UniProtKB-UniRule"/>
</dbReference>
<dbReference type="CDD" id="cd01190">
    <property type="entry name" value="INT_StrepXerD_C_like"/>
    <property type="match status" value="1"/>
</dbReference>
<dbReference type="Gene3D" id="1.10.150.130">
    <property type="match status" value="1"/>
</dbReference>
<dbReference type="Gene3D" id="1.10.443.10">
    <property type="entry name" value="Intergrase catalytic core"/>
    <property type="match status" value="1"/>
</dbReference>
<dbReference type="HAMAP" id="MF_01817">
    <property type="entry name" value="Recomb_XerD_like"/>
    <property type="match status" value="1"/>
</dbReference>
<dbReference type="InterPro" id="IPR044068">
    <property type="entry name" value="CB"/>
</dbReference>
<dbReference type="InterPro" id="IPR011010">
    <property type="entry name" value="DNA_brk_join_enz"/>
</dbReference>
<dbReference type="InterPro" id="IPR013762">
    <property type="entry name" value="Integrase-like_cat_sf"/>
</dbReference>
<dbReference type="InterPro" id="IPR002104">
    <property type="entry name" value="Integrase_catalytic"/>
</dbReference>
<dbReference type="InterPro" id="IPR010998">
    <property type="entry name" value="Integrase_recombinase_N"/>
</dbReference>
<dbReference type="InterPro" id="IPR020876">
    <property type="entry name" value="Tyrosine_recombinase_XerD-like"/>
</dbReference>
<dbReference type="NCBIfam" id="NF002685">
    <property type="entry name" value="PRK02436.1"/>
    <property type="match status" value="1"/>
</dbReference>
<dbReference type="SUPFAM" id="SSF56349">
    <property type="entry name" value="DNA breaking-rejoining enzymes"/>
    <property type="match status" value="1"/>
</dbReference>
<dbReference type="PROSITE" id="PS51900">
    <property type="entry name" value="CB"/>
    <property type="match status" value="1"/>
</dbReference>
<dbReference type="PROSITE" id="PS51898">
    <property type="entry name" value="TYR_RECOMBINASE"/>
    <property type="match status" value="1"/>
</dbReference>
<protein>
    <recommendedName>
        <fullName evidence="1">Tyrosine recombinase XerD-like</fullName>
    </recommendedName>
</protein>
<evidence type="ECO:0000255" key="1">
    <source>
        <dbReference type="HAMAP-Rule" id="MF_01817"/>
    </source>
</evidence>
<evidence type="ECO:0000255" key="2">
    <source>
        <dbReference type="PROSITE-ProRule" id="PRU01246"/>
    </source>
</evidence>
<evidence type="ECO:0000255" key="3">
    <source>
        <dbReference type="PROSITE-ProRule" id="PRU01248"/>
    </source>
</evidence>
<proteinExistence type="inferred from homology"/>
<comment type="function">
    <text evidence="1">Putative tyrosine recombinase. Not involved in the cutting and rejoining of the recombining DNA molecules on dif(SL) site.</text>
</comment>
<comment type="subcellular location">
    <subcellularLocation>
        <location evidence="1">Cytoplasm</location>
    </subcellularLocation>
</comment>
<comment type="similarity">
    <text evidence="1">Belongs to the 'phage' integrase family. XerD-like subfamily.</text>
</comment>
<gene>
    <name type="ordered locus">SpyM3_0266</name>
</gene>
<name>XERDL_STRP3</name>
<keyword id="KW-0963">Cytoplasm</keyword>
<keyword id="KW-0229">DNA integration</keyword>
<keyword id="KW-0233">DNA recombination</keyword>
<keyword id="KW-0238">DNA-binding</keyword>
<sequence length="248" mass="28804">MKSYIEPFIASKALSQNSQKAYRYDLQQFCQLVGERVNQDKLLLYQNSIANLSLSAKKRKLSTANQFLYYLYQIKYLNSYFRLTDTMKVMRTEKQQAAIINTDIFYQKTPFVWGQLISLLILELGLTPSEVAGIEVANLDLSFQMLTLKTKKGVRVLPLSQILIPFLEQQLIGKEVYLFEHRGIPFSRQWFFNHLKTFVRSIGYEGLTAQKLREQFILKEKLAGKSIIELSDILGLKSPVTLEKYYKS</sequence>
<organism>
    <name type="scientific">Streptococcus pyogenes serotype M3 (strain ATCC BAA-595 / MGAS315)</name>
    <dbReference type="NCBI Taxonomy" id="198466"/>
    <lineage>
        <taxon>Bacteria</taxon>
        <taxon>Bacillati</taxon>
        <taxon>Bacillota</taxon>
        <taxon>Bacilli</taxon>
        <taxon>Lactobacillales</taxon>
        <taxon>Streptococcaceae</taxon>
        <taxon>Streptococcus</taxon>
    </lineage>
</organism>
<accession>P0DH46</accession>
<accession>Q8K8I6</accession>
<reference key="1">
    <citation type="journal article" date="2002" name="Proc. Natl. Acad. Sci. U.S.A.">
        <title>Genome sequence of a serotype M3 strain of group A Streptococcus: phage-encoded toxins, the high-virulence phenotype, and clone emergence.</title>
        <authorList>
            <person name="Beres S.B."/>
            <person name="Sylva G.L."/>
            <person name="Barbian K.D."/>
            <person name="Lei B."/>
            <person name="Hoff J.S."/>
            <person name="Mammarella N.D."/>
            <person name="Liu M.-Y."/>
            <person name="Smoot J.C."/>
            <person name="Porcella S.F."/>
            <person name="Parkins L.D."/>
            <person name="Campbell D.S."/>
            <person name="Smith T.M."/>
            <person name="McCormick J.K."/>
            <person name="Leung D.Y.M."/>
            <person name="Schlievert P.M."/>
            <person name="Musser J.M."/>
        </authorList>
    </citation>
    <scope>NUCLEOTIDE SEQUENCE [LARGE SCALE GENOMIC DNA]</scope>
    <source>
        <strain>ATCC BAA-595 / MGAS315</strain>
    </source>
</reference>